<gene>
    <name type="primary">yqfB</name>
    <name type="ordered locus">BSU25370</name>
</gene>
<keyword id="KW-1003">Cell membrane</keyword>
<keyword id="KW-0175">Coiled coil</keyword>
<keyword id="KW-0472">Membrane</keyword>
<keyword id="KW-1185">Reference proteome</keyword>
<keyword id="KW-0812">Transmembrane</keyword>
<keyword id="KW-1133">Transmembrane helix</keyword>
<evidence type="ECO:0000255" key="1"/>
<evidence type="ECO:0000256" key="2">
    <source>
        <dbReference type="SAM" id="MobiDB-lite"/>
    </source>
</evidence>
<evidence type="ECO:0000269" key="3">
    <source>
    </source>
</evidence>
<evidence type="ECO:0000305" key="4"/>
<evidence type="ECO:0000305" key="5">
    <source>
    </source>
</evidence>
<comment type="subcellular location">
    <subcellularLocation>
        <location evidence="5">Cell membrane</location>
        <topology evidence="4">Single-pass membrane protein</topology>
    </subcellularLocation>
</comment>
<comment type="disruption phenotype">
    <text evidence="3">No visible phenotype, no effects on FloA or FloT membrane rafts.</text>
</comment>
<proteinExistence type="predicted"/>
<accession>P54467</accession>
<dbReference type="EMBL" id="D84432">
    <property type="protein sequence ID" value="BAA12474.1"/>
    <property type="molecule type" value="Genomic_DNA"/>
</dbReference>
<dbReference type="EMBL" id="AL009126">
    <property type="protein sequence ID" value="CAB14479.2"/>
    <property type="molecule type" value="Genomic_DNA"/>
</dbReference>
<dbReference type="PIR" id="B69953">
    <property type="entry name" value="B69953"/>
</dbReference>
<dbReference type="RefSeq" id="NP_390415.2">
    <property type="nucleotide sequence ID" value="NC_000964.3"/>
</dbReference>
<dbReference type="RefSeq" id="WP_003230029.1">
    <property type="nucleotide sequence ID" value="NZ_OZ025638.1"/>
</dbReference>
<dbReference type="FunCoup" id="P54467">
    <property type="interactions" value="8"/>
</dbReference>
<dbReference type="STRING" id="224308.BSU25370"/>
<dbReference type="PaxDb" id="224308-BSU25370"/>
<dbReference type="EnsemblBacteria" id="CAB14479">
    <property type="protein sequence ID" value="CAB14479"/>
    <property type="gene ID" value="BSU_25370"/>
</dbReference>
<dbReference type="GeneID" id="937864"/>
<dbReference type="KEGG" id="bsu:BSU25370"/>
<dbReference type="PATRIC" id="fig|224308.179.peg.2758"/>
<dbReference type="eggNOG" id="ENOG5030CK6">
    <property type="taxonomic scope" value="Bacteria"/>
</dbReference>
<dbReference type="InParanoid" id="P54467"/>
<dbReference type="OrthoDB" id="2967741at2"/>
<dbReference type="BioCyc" id="BSUB:BSU25370-MONOMER"/>
<dbReference type="Proteomes" id="UP000001570">
    <property type="component" value="Chromosome"/>
</dbReference>
<dbReference type="GO" id="GO:0005886">
    <property type="term" value="C:plasma membrane"/>
    <property type="evidence" value="ECO:0007669"/>
    <property type="project" value="UniProtKB-SubCell"/>
</dbReference>
<dbReference type="InterPro" id="IPR016788">
    <property type="entry name" value="YqfB"/>
</dbReference>
<dbReference type="PIRSF" id="PIRSF021361">
    <property type="entry name" value="UCP021361"/>
    <property type="match status" value="1"/>
</dbReference>
<feature type="chain" id="PRO_0000049794" description="Membrane protein YqfB">
    <location>
        <begin position="1"/>
        <end position="139"/>
    </location>
</feature>
<feature type="transmembrane region" description="Helical" evidence="1">
    <location>
        <begin position="3"/>
        <end position="23"/>
    </location>
</feature>
<feature type="region of interest" description="Disordered" evidence="2">
    <location>
        <begin position="25"/>
        <end position="87"/>
    </location>
</feature>
<feature type="coiled-coil region" evidence="1">
    <location>
        <begin position="62"/>
        <end position="97"/>
    </location>
</feature>
<feature type="compositionally biased region" description="Basic and acidic residues" evidence="2">
    <location>
        <begin position="65"/>
        <end position="87"/>
    </location>
</feature>
<feature type="sequence conflict" description="In Ref. 1; BAA12474." evidence="4" ref="1">
    <original>E</original>
    <variation>V</variation>
    <location>
        <position position="65"/>
    </location>
</feature>
<sequence length="139" mass="15770">MEDLLTNPLIIAAIIGIISAIFGKKSKEEKQNSQKRKKPQHVQSASPQKKQSKEDAPAPIPNRMEQARREAEERRRETARNLKGLERDLAAAKQKTVYTKQKMLQVNKDTVVQGIVLGEVFGPPRAKKPHRTMRPARKN</sequence>
<reference key="1">
    <citation type="journal article" date="1996" name="Microbiology">
        <title>Systematic sequencing of the 283 kb 210 degrees-232 degrees region of the Bacillus subtilis genome containing the skin element and many sporulation genes.</title>
        <authorList>
            <person name="Mizuno M."/>
            <person name="Masuda S."/>
            <person name="Takemaru K."/>
            <person name="Hosono S."/>
            <person name="Sato T."/>
            <person name="Takeuchi M."/>
            <person name="Kobayashi Y."/>
        </authorList>
    </citation>
    <scope>NUCLEOTIDE SEQUENCE [GENOMIC DNA]</scope>
    <source>
        <strain>168 / JH642</strain>
    </source>
</reference>
<reference key="2">
    <citation type="journal article" date="1997" name="Nature">
        <title>The complete genome sequence of the Gram-positive bacterium Bacillus subtilis.</title>
        <authorList>
            <person name="Kunst F."/>
            <person name="Ogasawara N."/>
            <person name="Moszer I."/>
            <person name="Albertini A.M."/>
            <person name="Alloni G."/>
            <person name="Azevedo V."/>
            <person name="Bertero M.G."/>
            <person name="Bessieres P."/>
            <person name="Bolotin A."/>
            <person name="Borchert S."/>
            <person name="Borriss R."/>
            <person name="Boursier L."/>
            <person name="Brans A."/>
            <person name="Braun M."/>
            <person name="Brignell S.C."/>
            <person name="Bron S."/>
            <person name="Brouillet S."/>
            <person name="Bruschi C.V."/>
            <person name="Caldwell B."/>
            <person name="Capuano V."/>
            <person name="Carter N.M."/>
            <person name="Choi S.-K."/>
            <person name="Codani J.-J."/>
            <person name="Connerton I.F."/>
            <person name="Cummings N.J."/>
            <person name="Daniel R.A."/>
            <person name="Denizot F."/>
            <person name="Devine K.M."/>
            <person name="Duesterhoeft A."/>
            <person name="Ehrlich S.D."/>
            <person name="Emmerson P.T."/>
            <person name="Entian K.-D."/>
            <person name="Errington J."/>
            <person name="Fabret C."/>
            <person name="Ferrari E."/>
            <person name="Foulger D."/>
            <person name="Fritz C."/>
            <person name="Fujita M."/>
            <person name="Fujita Y."/>
            <person name="Fuma S."/>
            <person name="Galizzi A."/>
            <person name="Galleron N."/>
            <person name="Ghim S.-Y."/>
            <person name="Glaser P."/>
            <person name="Goffeau A."/>
            <person name="Golightly E.J."/>
            <person name="Grandi G."/>
            <person name="Guiseppi G."/>
            <person name="Guy B.J."/>
            <person name="Haga K."/>
            <person name="Haiech J."/>
            <person name="Harwood C.R."/>
            <person name="Henaut A."/>
            <person name="Hilbert H."/>
            <person name="Holsappel S."/>
            <person name="Hosono S."/>
            <person name="Hullo M.-F."/>
            <person name="Itaya M."/>
            <person name="Jones L.-M."/>
            <person name="Joris B."/>
            <person name="Karamata D."/>
            <person name="Kasahara Y."/>
            <person name="Klaerr-Blanchard M."/>
            <person name="Klein C."/>
            <person name="Kobayashi Y."/>
            <person name="Koetter P."/>
            <person name="Koningstein G."/>
            <person name="Krogh S."/>
            <person name="Kumano M."/>
            <person name="Kurita K."/>
            <person name="Lapidus A."/>
            <person name="Lardinois S."/>
            <person name="Lauber J."/>
            <person name="Lazarevic V."/>
            <person name="Lee S.-M."/>
            <person name="Levine A."/>
            <person name="Liu H."/>
            <person name="Masuda S."/>
            <person name="Mauel C."/>
            <person name="Medigue C."/>
            <person name="Medina N."/>
            <person name="Mellado R.P."/>
            <person name="Mizuno M."/>
            <person name="Moestl D."/>
            <person name="Nakai S."/>
            <person name="Noback M."/>
            <person name="Noone D."/>
            <person name="O'Reilly M."/>
            <person name="Ogawa K."/>
            <person name="Ogiwara A."/>
            <person name="Oudega B."/>
            <person name="Park S.-H."/>
            <person name="Parro V."/>
            <person name="Pohl T.M."/>
            <person name="Portetelle D."/>
            <person name="Porwollik S."/>
            <person name="Prescott A.M."/>
            <person name="Presecan E."/>
            <person name="Pujic P."/>
            <person name="Purnelle B."/>
            <person name="Rapoport G."/>
            <person name="Rey M."/>
            <person name="Reynolds S."/>
            <person name="Rieger M."/>
            <person name="Rivolta C."/>
            <person name="Rocha E."/>
            <person name="Roche B."/>
            <person name="Rose M."/>
            <person name="Sadaie Y."/>
            <person name="Sato T."/>
            <person name="Scanlan E."/>
            <person name="Schleich S."/>
            <person name="Schroeter R."/>
            <person name="Scoffone F."/>
            <person name="Sekiguchi J."/>
            <person name="Sekowska A."/>
            <person name="Seror S.J."/>
            <person name="Serror P."/>
            <person name="Shin B.-S."/>
            <person name="Soldo B."/>
            <person name="Sorokin A."/>
            <person name="Tacconi E."/>
            <person name="Takagi T."/>
            <person name="Takahashi H."/>
            <person name="Takemaru K."/>
            <person name="Takeuchi M."/>
            <person name="Tamakoshi A."/>
            <person name="Tanaka T."/>
            <person name="Terpstra P."/>
            <person name="Tognoni A."/>
            <person name="Tosato V."/>
            <person name="Uchiyama S."/>
            <person name="Vandenbol M."/>
            <person name="Vannier F."/>
            <person name="Vassarotti A."/>
            <person name="Viari A."/>
            <person name="Wambutt R."/>
            <person name="Wedler E."/>
            <person name="Wedler H."/>
            <person name="Weitzenegger T."/>
            <person name="Winters P."/>
            <person name="Wipat A."/>
            <person name="Yamamoto H."/>
            <person name="Yamane K."/>
            <person name="Yasumoto K."/>
            <person name="Yata K."/>
            <person name="Yoshida K."/>
            <person name="Yoshikawa H.-F."/>
            <person name="Zumstein E."/>
            <person name="Yoshikawa H."/>
            <person name="Danchin A."/>
        </authorList>
    </citation>
    <scope>NUCLEOTIDE SEQUENCE [LARGE SCALE GENOMIC DNA]</scope>
    <source>
        <strain>168</strain>
    </source>
</reference>
<reference key="3">
    <citation type="journal article" date="2009" name="Microbiology">
        <title>From a consortium sequence to a unified sequence: the Bacillus subtilis 168 reference genome a decade later.</title>
        <authorList>
            <person name="Barbe V."/>
            <person name="Cruveiller S."/>
            <person name="Kunst F."/>
            <person name="Lenoble P."/>
            <person name="Meurice G."/>
            <person name="Sekowska A."/>
            <person name="Vallenet D."/>
            <person name="Wang T."/>
            <person name="Moszer I."/>
            <person name="Medigue C."/>
            <person name="Danchin A."/>
        </authorList>
    </citation>
    <scope>SEQUENCE REVISION TO 65</scope>
</reference>
<reference key="4">
    <citation type="journal article" date="2012" name="J. Bacteriol.">
        <title>Synthetic motility and cell shape defects associated with deletions of flotillin/reggie paralogs in Bacillus subtilis and interplay of these proteins with NfeD proteins.</title>
        <authorList>
            <person name="Dempwolff F."/>
            <person name="Moeller H.M."/>
            <person name="Graumann P.L."/>
        </authorList>
    </citation>
    <scope>SUBCELLULAR LOCATION</scope>
    <scope>DISRUPTION PHENOTYPE</scope>
    <source>
        <strain>168 / PY79</strain>
    </source>
</reference>
<name>YQFB_BACSU</name>
<protein>
    <recommendedName>
        <fullName>Membrane protein YqfB</fullName>
    </recommendedName>
</protein>
<organism>
    <name type="scientific">Bacillus subtilis (strain 168)</name>
    <dbReference type="NCBI Taxonomy" id="224308"/>
    <lineage>
        <taxon>Bacteria</taxon>
        <taxon>Bacillati</taxon>
        <taxon>Bacillota</taxon>
        <taxon>Bacilli</taxon>
        <taxon>Bacillales</taxon>
        <taxon>Bacillaceae</taxon>
        <taxon>Bacillus</taxon>
    </lineage>
</organism>